<keyword id="KW-1185">Reference proteome</keyword>
<keyword id="KW-0687">Ribonucleoprotein</keyword>
<keyword id="KW-0689">Ribosomal protein</keyword>
<name>RS9_STRPN</name>
<dbReference type="EMBL" id="AE005672">
    <property type="protein sequence ID" value="AAK74473.1"/>
    <property type="molecule type" value="Genomic_DNA"/>
</dbReference>
<dbReference type="PIR" id="H95034">
    <property type="entry name" value="H95034"/>
</dbReference>
<dbReference type="RefSeq" id="WP_000075966.1">
    <property type="nucleotide sequence ID" value="NZ_CP155539.1"/>
</dbReference>
<dbReference type="SMR" id="Q97SN4"/>
<dbReference type="PaxDb" id="170187-SP_0295"/>
<dbReference type="EnsemblBacteria" id="AAK74473">
    <property type="protein sequence ID" value="AAK74473"/>
    <property type="gene ID" value="SP_0295"/>
</dbReference>
<dbReference type="KEGG" id="spn:SP_0295"/>
<dbReference type="eggNOG" id="COG0103">
    <property type="taxonomic scope" value="Bacteria"/>
</dbReference>
<dbReference type="PhylomeDB" id="Q97SN4"/>
<dbReference type="BioCyc" id="SPNE170187:G1FZB-304-MONOMER"/>
<dbReference type="Proteomes" id="UP000000585">
    <property type="component" value="Chromosome"/>
</dbReference>
<dbReference type="GO" id="GO:0022627">
    <property type="term" value="C:cytosolic small ribosomal subunit"/>
    <property type="evidence" value="ECO:0007669"/>
    <property type="project" value="TreeGrafter"/>
</dbReference>
<dbReference type="GO" id="GO:0003723">
    <property type="term" value="F:RNA binding"/>
    <property type="evidence" value="ECO:0007669"/>
    <property type="project" value="TreeGrafter"/>
</dbReference>
<dbReference type="GO" id="GO:0003735">
    <property type="term" value="F:structural constituent of ribosome"/>
    <property type="evidence" value="ECO:0007669"/>
    <property type="project" value="InterPro"/>
</dbReference>
<dbReference type="GO" id="GO:0006412">
    <property type="term" value="P:translation"/>
    <property type="evidence" value="ECO:0007669"/>
    <property type="project" value="UniProtKB-UniRule"/>
</dbReference>
<dbReference type="FunFam" id="3.30.230.10:FF:000001">
    <property type="entry name" value="30S ribosomal protein S9"/>
    <property type="match status" value="1"/>
</dbReference>
<dbReference type="Gene3D" id="3.30.230.10">
    <property type="match status" value="1"/>
</dbReference>
<dbReference type="HAMAP" id="MF_00532_B">
    <property type="entry name" value="Ribosomal_uS9_B"/>
    <property type="match status" value="1"/>
</dbReference>
<dbReference type="InterPro" id="IPR020568">
    <property type="entry name" value="Ribosomal_Su5_D2-typ_SF"/>
</dbReference>
<dbReference type="InterPro" id="IPR000754">
    <property type="entry name" value="Ribosomal_uS9"/>
</dbReference>
<dbReference type="InterPro" id="IPR023035">
    <property type="entry name" value="Ribosomal_uS9_bac/plastid"/>
</dbReference>
<dbReference type="InterPro" id="IPR020574">
    <property type="entry name" value="Ribosomal_uS9_CS"/>
</dbReference>
<dbReference type="InterPro" id="IPR014721">
    <property type="entry name" value="Ribsml_uS5_D2-typ_fold_subgr"/>
</dbReference>
<dbReference type="NCBIfam" id="NF001099">
    <property type="entry name" value="PRK00132.1"/>
    <property type="match status" value="1"/>
</dbReference>
<dbReference type="PANTHER" id="PTHR21569">
    <property type="entry name" value="RIBOSOMAL PROTEIN S9"/>
    <property type="match status" value="1"/>
</dbReference>
<dbReference type="PANTHER" id="PTHR21569:SF1">
    <property type="entry name" value="SMALL RIBOSOMAL SUBUNIT PROTEIN US9M"/>
    <property type="match status" value="1"/>
</dbReference>
<dbReference type="Pfam" id="PF00380">
    <property type="entry name" value="Ribosomal_S9"/>
    <property type="match status" value="1"/>
</dbReference>
<dbReference type="SUPFAM" id="SSF54211">
    <property type="entry name" value="Ribosomal protein S5 domain 2-like"/>
    <property type="match status" value="1"/>
</dbReference>
<dbReference type="PROSITE" id="PS00360">
    <property type="entry name" value="RIBOSOMAL_S9"/>
    <property type="match status" value="1"/>
</dbReference>
<feature type="chain" id="PRO_0000111420" description="Small ribosomal subunit protein uS9">
    <location>
        <begin position="1"/>
        <end position="130"/>
    </location>
</feature>
<feature type="region of interest" description="Disordered" evidence="2">
    <location>
        <begin position="106"/>
        <end position="130"/>
    </location>
</feature>
<feature type="compositionally biased region" description="Basic residues" evidence="2">
    <location>
        <begin position="111"/>
        <end position="130"/>
    </location>
</feature>
<reference key="1">
    <citation type="journal article" date="2001" name="Science">
        <title>Complete genome sequence of a virulent isolate of Streptococcus pneumoniae.</title>
        <authorList>
            <person name="Tettelin H."/>
            <person name="Nelson K.E."/>
            <person name="Paulsen I.T."/>
            <person name="Eisen J.A."/>
            <person name="Read T.D."/>
            <person name="Peterson S.N."/>
            <person name="Heidelberg J.F."/>
            <person name="DeBoy R.T."/>
            <person name="Haft D.H."/>
            <person name="Dodson R.J."/>
            <person name="Durkin A.S."/>
            <person name="Gwinn M.L."/>
            <person name="Kolonay J.F."/>
            <person name="Nelson W.C."/>
            <person name="Peterson J.D."/>
            <person name="Umayam L.A."/>
            <person name="White O."/>
            <person name="Salzberg S.L."/>
            <person name="Lewis M.R."/>
            <person name="Radune D."/>
            <person name="Holtzapple E.K."/>
            <person name="Khouri H.M."/>
            <person name="Wolf A.M."/>
            <person name="Utterback T.R."/>
            <person name="Hansen C.L."/>
            <person name="McDonald L.A."/>
            <person name="Feldblyum T.V."/>
            <person name="Angiuoli S.V."/>
            <person name="Dickinson T."/>
            <person name="Hickey E.K."/>
            <person name="Holt I.E."/>
            <person name="Loftus B.J."/>
            <person name="Yang F."/>
            <person name="Smith H.O."/>
            <person name="Venter J.C."/>
            <person name="Dougherty B.A."/>
            <person name="Morrison D.A."/>
            <person name="Hollingshead S.K."/>
            <person name="Fraser C.M."/>
        </authorList>
    </citation>
    <scope>NUCLEOTIDE SEQUENCE [LARGE SCALE GENOMIC DNA]</scope>
    <source>
        <strain>ATCC BAA-334 / TIGR4</strain>
    </source>
</reference>
<protein>
    <recommendedName>
        <fullName evidence="1">Small ribosomal subunit protein uS9</fullName>
    </recommendedName>
    <alternativeName>
        <fullName evidence="3">30S ribosomal protein S9</fullName>
    </alternativeName>
</protein>
<organism>
    <name type="scientific">Streptococcus pneumoniae serotype 4 (strain ATCC BAA-334 / TIGR4)</name>
    <dbReference type="NCBI Taxonomy" id="170187"/>
    <lineage>
        <taxon>Bacteria</taxon>
        <taxon>Bacillati</taxon>
        <taxon>Bacillota</taxon>
        <taxon>Bacilli</taxon>
        <taxon>Lactobacillales</taxon>
        <taxon>Streptococcaceae</taxon>
        <taxon>Streptococcus</taxon>
    </lineage>
</organism>
<comment type="similarity">
    <text evidence="1">Belongs to the universal ribosomal protein uS9 family.</text>
</comment>
<sequence length="130" mass="14248">MSQAQYAGTGRRKNAVARVRLVPGTGKITVNKKDVEEYIPHADLRLVINQPFAVTSTVGSYDVFVNVIGGGYAGQSGAIRHGIARALLQVDPDFRDSLKRAGLLTRDSRKVERKKPGLKKARKASQFSKR</sequence>
<evidence type="ECO:0000255" key="1">
    <source>
        <dbReference type="HAMAP-Rule" id="MF_00532"/>
    </source>
</evidence>
<evidence type="ECO:0000256" key="2">
    <source>
        <dbReference type="SAM" id="MobiDB-lite"/>
    </source>
</evidence>
<evidence type="ECO:0000305" key="3"/>
<proteinExistence type="inferred from homology"/>
<accession>Q97SN4</accession>
<gene>
    <name evidence="1" type="primary">rpsI</name>
    <name type="ordered locus">SP_0295</name>
</gene>